<evidence type="ECO:0000250" key="1"/>
<evidence type="ECO:0000255" key="2">
    <source>
        <dbReference type="PROSITE-ProRule" id="PRU00142"/>
    </source>
</evidence>
<evidence type="ECO:0000255" key="3">
    <source>
        <dbReference type="PROSITE-ProRule" id="PRU00150"/>
    </source>
</evidence>
<evidence type="ECO:0000256" key="4">
    <source>
        <dbReference type="SAM" id="MobiDB-lite"/>
    </source>
</evidence>
<evidence type="ECO:0000305" key="5"/>
<gene>
    <name type="primary">AGO3</name>
    <name type="ordered locus">At1g31290</name>
    <name type="ORF">T19E23.8</name>
</gene>
<protein>
    <recommendedName>
        <fullName>Protein argonaute 3</fullName>
    </recommendedName>
</protein>
<name>AGO3_ARATH</name>
<feature type="chain" id="PRO_0000404666" description="Protein argonaute 3">
    <location>
        <begin position="1"/>
        <end position="1194"/>
    </location>
</feature>
<feature type="domain" description="PAZ" evidence="2">
    <location>
        <begin position="540"/>
        <end position="656"/>
    </location>
</feature>
<feature type="domain" description="Piwi" evidence="3">
    <location>
        <begin position="841"/>
        <end position="1145"/>
    </location>
</feature>
<feature type="region of interest" description="Disordered" evidence="4">
    <location>
        <begin position="1"/>
        <end position="277"/>
    </location>
</feature>
<feature type="region of interest" description="Disordered" evidence="4">
    <location>
        <begin position="299"/>
        <end position="341"/>
    </location>
</feature>
<feature type="compositionally biased region" description="Basic and acidic residues" evidence="4">
    <location>
        <begin position="1"/>
        <end position="98"/>
    </location>
</feature>
<feature type="compositionally biased region" description="Low complexity" evidence="4">
    <location>
        <begin position="142"/>
        <end position="158"/>
    </location>
</feature>
<feature type="compositionally biased region" description="Basic and acidic residues" evidence="4">
    <location>
        <begin position="167"/>
        <end position="180"/>
    </location>
</feature>
<feature type="compositionally biased region" description="Gly residues" evidence="4">
    <location>
        <begin position="181"/>
        <end position="214"/>
    </location>
</feature>
<feature type="compositionally biased region" description="Basic and acidic residues" evidence="4">
    <location>
        <begin position="215"/>
        <end position="228"/>
    </location>
</feature>
<feature type="compositionally biased region" description="Gly residues" evidence="4">
    <location>
        <begin position="229"/>
        <end position="238"/>
    </location>
</feature>
<feature type="compositionally biased region" description="Low complexity" evidence="4">
    <location>
        <begin position="256"/>
        <end position="277"/>
    </location>
</feature>
<feature type="compositionally biased region" description="Low complexity" evidence="4">
    <location>
        <begin position="299"/>
        <end position="316"/>
    </location>
</feature>
<feature type="compositionally biased region" description="Polar residues" evidence="4">
    <location>
        <begin position="317"/>
        <end position="326"/>
    </location>
</feature>
<feature type="compositionally biased region" description="Basic and acidic residues" evidence="4">
    <location>
        <begin position="327"/>
        <end position="341"/>
    </location>
</feature>
<proteinExistence type="inferred from homology"/>
<reference key="1">
    <citation type="journal article" date="2000" name="Nature">
        <title>Sequence and analysis of chromosome 1 of the plant Arabidopsis thaliana.</title>
        <authorList>
            <person name="Theologis A."/>
            <person name="Ecker J.R."/>
            <person name="Palm C.J."/>
            <person name="Federspiel N.A."/>
            <person name="Kaul S."/>
            <person name="White O."/>
            <person name="Alonso J."/>
            <person name="Altafi H."/>
            <person name="Araujo R."/>
            <person name="Bowman C.L."/>
            <person name="Brooks S.Y."/>
            <person name="Buehler E."/>
            <person name="Chan A."/>
            <person name="Chao Q."/>
            <person name="Chen H."/>
            <person name="Cheuk R.F."/>
            <person name="Chin C.W."/>
            <person name="Chung M.K."/>
            <person name="Conn L."/>
            <person name="Conway A.B."/>
            <person name="Conway A.R."/>
            <person name="Creasy T.H."/>
            <person name="Dewar K."/>
            <person name="Dunn P."/>
            <person name="Etgu P."/>
            <person name="Feldblyum T.V."/>
            <person name="Feng J.-D."/>
            <person name="Fong B."/>
            <person name="Fujii C.Y."/>
            <person name="Gill J.E."/>
            <person name="Goldsmith A.D."/>
            <person name="Haas B."/>
            <person name="Hansen N.F."/>
            <person name="Hughes B."/>
            <person name="Huizar L."/>
            <person name="Hunter J.L."/>
            <person name="Jenkins J."/>
            <person name="Johnson-Hopson C."/>
            <person name="Khan S."/>
            <person name="Khaykin E."/>
            <person name="Kim C.J."/>
            <person name="Koo H.L."/>
            <person name="Kremenetskaia I."/>
            <person name="Kurtz D.B."/>
            <person name="Kwan A."/>
            <person name="Lam B."/>
            <person name="Langin-Hooper S."/>
            <person name="Lee A."/>
            <person name="Lee J.M."/>
            <person name="Lenz C.A."/>
            <person name="Li J.H."/>
            <person name="Li Y.-P."/>
            <person name="Lin X."/>
            <person name="Liu S.X."/>
            <person name="Liu Z.A."/>
            <person name="Luros J.S."/>
            <person name="Maiti R."/>
            <person name="Marziali A."/>
            <person name="Militscher J."/>
            <person name="Miranda M."/>
            <person name="Nguyen M."/>
            <person name="Nierman W.C."/>
            <person name="Osborne B.I."/>
            <person name="Pai G."/>
            <person name="Peterson J."/>
            <person name="Pham P.K."/>
            <person name="Rizzo M."/>
            <person name="Rooney T."/>
            <person name="Rowley D."/>
            <person name="Sakano H."/>
            <person name="Salzberg S.L."/>
            <person name="Schwartz J.R."/>
            <person name="Shinn P."/>
            <person name="Southwick A.M."/>
            <person name="Sun H."/>
            <person name="Tallon L.J."/>
            <person name="Tambunga G."/>
            <person name="Toriumi M.J."/>
            <person name="Town C.D."/>
            <person name="Utterback T."/>
            <person name="Van Aken S."/>
            <person name="Vaysberg M."/>
            <person name="Vysotskaia V.S."/>
            <person name="Walker M."/>
            <person name="Wu D."/>
            <person name="Yu G."/>
            <person name="Fraser C.M."/>
            <person name="Venter J.C."/>
            <person name="Davis R.W."/>
        </authorList>
    </citation>
    <scope>NUCLEOTIDE SEQUENCE [LARGE SCALE GENOMIC DNA]</scope>
    <source>
        <strain>cv. Columbia</strain>
    </source>
</reference>
<reference key="2">
    <citation type="journal article" date="2017" name="Plant J.">
        <title>Araport11: a complete reannotation of the Arabidopsis thaliana reference genome.</title>
        <authorList>
            <person name="Cheng C.Y."/>
            <person name="Krishnakumar V."/>
            <person name="Chan A.P."/>
            <person name="Thibaud-Nissen F."/>
            <person name="Schobel S."/>
            <person name="Town C.D."/>
        </authorList>
    </citation>
    <scope>GENOME REANNOTATION</scope>
    <source>
        <strain>cv. Columbia</strain>
    </source>
</reference>
<sequence>MDRGGYRGGRGDGRGRGGGGDRGRGYSGRGDGRGRGGDGDRGYSGRGDGHGRGGGGDRGRGYSGRGDGRGRGGGGDRGRGYSGRGDGHGRGGGGDRGRGYSGRGRGFVQDRDGGWVNPGQSSGGHVRGRGTQLQQPPPQEVPPSSSQAQVSQGVAPGDVGQGGVGDVGRDGVGDVGRDGVGDVGQGGVGDVGQVGVGDVGQGGVGDVGQGGVGDVGRDGVGDVGRDGVGDVGRGGVGDRGQSQSGLSSGHFGRGTQLQQPQPQAVSQSSSQGQVSQSFATGGVGLGAWARKPQLFSDSTVLPSSSSSNVVASHTASGSQVMTPKPSSSDKKEPVKRPDKGGNIKVKGVINLSVNHFRVSFSTESVIRHYDVDIKGENSSKKISRFELAMVKEKLFKDNNDFPNAMTAYDGQKNIFSAVELPTGSFKVDFSETEEIMRGRSYTFIIKQVKELKLLDLQAYIDGRSTFIPRDVLQGMDVVMKEHPSKRMITVGKRFFSTRLEIDFGYGVGAAKGFHHTLKPTVQGLSLCLNSSLLAFRKAISVIEYLKLYFGWRNIRQFKNCRPDDVVQELIGLKVTVDHRKTKQKFIIMGLSKDDTKDIKFDFIDHAGNQPPRKISIVEYFKEKYGRDIDHKDIPCLNLGKKGRENFVPMEFCNLVEGQIFPKEKLYRDSAAWLKELSLVTPQQRLENINKMIKSSDGPRGGDIIGNFGLRVDPNMTTVEGRVLEAPTLKLTDRRGNPIHEKLMSESNQWNLTTKGVTKGSIIKHWAVLDFTASESLKKKMPGYFVNKLIERCKGLGMQMEAPIVCKTSSMETLYDGNALEELLRSVIDEASHNHGGACPTLVLCAMTGKHDGYKTLKWIAETKLGLVTQCFLTISAIKGETVSDQYLANLALKINAKVGGTNVELVDNIFSFFKKEDKVMFIGADVNHPAAHDNMSPSIVAVVGTLNWPEANRYAARVKAQSHRKEEIQGFGETCWELIEAHSQAPEKRPNKIVIFRDGVSDGQFDMVLNVELQNVKDVFAKVGYNPQITVIVAQKRHQTRFFPATTSKDGRAKGNVPSGTVVDTTIIHPFEYDFYLCSQHGAIGTSKPTHYYVLSDEIGFNSNQIQKLIFDLCFTFTRCTKPVALVPPVSYADKAASRGRVYYEASLMKKNSKQSRGASSSSASVASSSSSVTMEDKEIFKVHAGIENFMFFV</sequence>
<accession>Q9SHF2</accession>
<keyword id="KW-0611">Plant defense</keyword>
<keyword id="KW-1185">Reference proteome</keyword>
<keyword id="KW-0678">Repressor</keyword>
<keyword id="KW-0687">Ribonucleoprotein</keyword>
<keyword id="KW-0694">RNA-binding</keyword>
<keyword id="KW-0943">RNA-mediated gene silencing</keyword>
<keyword id="KW-0804">Transcription</keyword>
<keyword id="KW-0805">Transcription regulation</keyword>
<keyword id="KW-0810">Translation regulation</keyword>
<comment type="function">
    <text evidence="1">Involved in RNA-mediated post-transcriptional gene silencing (PTGS). Main component of the RNA-induced silencing complex (RISC) that binds to a short guide RNA such as a microRNA (miRNA) or small interfering RNA (siRNA). RISC uses the mature miRNA or siRNA as a guide for slicer-directed cleavage of homologous mRNAs to repress gene expression (By similarity).</text>
</comment>
<comment type="similarity">
    <text evidence="5">Belongs to the argonaute family. Ago subfamily.</text>
</comment>
<organism>
    <name type="scientific">Arabidopsis thaliana</name>
    <name type="common">Mouse-ear cress</name>
    <dbReference type="NCBI Taxonomy" id="3702"/>
    <lineage>
        <taxon>Eukaryota</taxon>
        <taxon>Viridiplantae</taxon>
        <taxon>Streptophyta</taxon>
        <taxon>Embryophyta</taxon>
        <taxon>Tracheophyta</taxon>
        <taxon>Spermatophyta</taxon>
        <taxon>Magnoliopsida</taxon>
        <taxon>eudicotyledons</taxon>
        <taxon>Gunneridae</taxon>
        <taxon>Pentapetalae</taxon>
        <taxon>rosids</taxon>
        <taxon>malvids</taxon>
        <taxon>Brassicales</taxon>
        <taxon>Brassicaceae</taxon>
        <taxon>Camelineae</taxon>
        <taxon>Arabidopsis</taxon>
    </lineage>
</organism>
<dbReference type="EMBL" id="AC007654">
    <property type="protein sequence ID" value="AAF24586.1"/>
    <property type="molecule type" value="Genomic_DNA"/>
</dbReference>
<dbReference type="EMBL" id="CP002684">
    <property type="protein sequence ID" value="AEE31336.1"/>
    <property type="molecule type" value="Genomic_DNA"/>
</dbReference>
<dbReference type="RefSeq" id="NP_174414.1">
    <property type="nucleotide sequence ID" value="NM_102867.2"/>
</dbReference>
<dbReference type="SMR" id="Q9SHF2"/>
<dbReference type="FunCoup" id="Q9SHF2">
    <property type="interactions" value="3"/>
</dbReference>
<dbReference type="IntAct" id="Q9SHF2">
    <property type="interactions" value="1"/>
</dbReference>
<dbReference type="STRING" id="3702.Q9SHF2"/>
<dbReference type="iPTMnet" id="Q9SHF2"/>
<dbReference type="PaxDb" id="3702-AT1G31290.1"/>
<dbReference type="ProteomicsDB" id="244773"/>
<dbReference type="EnsemblPlants" id="AT1G31290.1">
    <property type="protein sequence ID" value="AT1G31290.1"/>
    <property type="gene ID" value="AT1G31290"/>
</dbReference>
<dbReference type="GeneID" id="840017"/>
<dbReference type="Gramene" id="AT1G31290.1">
    <property type="protein sequence ID" value="AT1G31290.1"/>
    <property type="gene ID" value="AT1G31290"/>
</dbReference>
<dbReference type="KEGG" id="ath:AT1G31290"/>
<dbReference type="Araport" id="AT1G31290"/>
<dbReference type="TAIR" id="AT1G31290">
    <property type="gene designation" value="AGO3"/>
</dbReference>
<dbReference type="eggNOG" id="KOG1041">
    <property type="taxonomic scope" value="Eukaryota"/>
</dbReference>
<dbReference type="HOGENOM" id="CLU_004544_3_0_1"/>
<dbReference type="InParanoid" id="Q9SHF2"/>
<dbReference type="PhylomeDB" id="Q9SHF2"/>
<dbReference type="PRO" id="PR:Q9SHF2"/>
<dbReference type="Proteomes" id="UP000006548">
    <property type="component" value="Chromosome 1"/>
</dbReference>
<dbReference type="ExpressionAtlas" id="Q9SHF2">
    <property type="expression patterns" value="baseline and differential"/>
</dbReference>
<dbReference type="GO" id="GO:1990904">
    <property type="term" value="C:ribonucleoprotein complex"/>
    <property type="evidence" value="ECO:0007669"/>
    <property type="project" value="UniProtKB-KW"/>
</dbReference>
<dbReference type="GO" id="GO:0003723">
    <property type="term" value="F:RNA binding"/>
    <property type="evidence" value="ECO:0007669"/>
    <property type="project" value="UniProtKB-KW"/>
</dbReference>
<dbReference type="GO" id="GO:0051607">
    <property type="term" value="P:defense response to virus"/>
    <property type="evidence" value="ECO:0000314"/>
    <property type="project" value="TAIR"/>
</dbReference>
<dbReference type="GO" id="GO:0006417">
    <property type="term" value="P:regulation of translation"/>
    <property type="evidence" value="ECO:0007669"/>
    <property type="project" value="UniProtKB-KW"/>
</dbReference>
<dbReference type="GO" id="GO:0031047">
    <property type="term" value="P:regulatory ncRNA-mediated gene silencing"/>
    <property type="evidence" value="ECO:0007669"/>
    <property type="project" value="UniProtKB-KW"/>
</dbReference>
<dbReference type="CDD" id="cd02846">
    <property type="entry name" value="PAZ_argonaute_like"/>
    <property type="match status" value="1"/>
</dbReference>
<dbReference type="CDD" id="cd04657">
    <property type="entry name" value="Piwi_ago-like"/>
    <property type="match status" value="1"/>
</dbReference>
<dbReference type="FunFam" id="3.40.50.2300:FF:000561">
    <property type="entry name" value="Protein argonaute 2"/>
    <property type="match status" value="1"/>
</dbReference>
<dbReference type="FunFam" id="3.30.420.10:FF:000091">
    <property type="entry name" value="Protein argonaute 3"/>
    <property type="match status" value="1"/>
</dbReference>
<dbReference type="FunFam" id="2.170.260.10:FF:000008">
    <property type="entry name" value="Protein argonaute 7"/>
    <property type="match status" value="1"/>
</dbReference>
<dbReference type="Gene3D" id="3.40.50.2300">
    <property type="match status" value="1"/>
</dbReference>
<dbReference type="Gene3D" id="2.170.260.10">
    <property type="entry name" value="paz domain"/>
    <property type="match status" value="1"/>
</dbReference>
<dbReference type="Gene3D" id="3.30.420.10">
    <property type="entry name" value="Ribonuclease H-like superfamily/Ribonuclease H"/>
    <property type="match status" value="1"/>
</dbReference>
<dbReference type="InterPro" id="IPR014811">
    <property type="entry name" value="ArgoL1"/>
</dbReference>
<dbReference type="InterPro" id="IPR032472">
    <property type="entry name" value="ArgoL2"/>
</dbReference>
<dbReference type="InterPro" id="IPR032474">
    <property type="entry name" value="Argonaute_N"/>
</dbReference>
<dbReference type="InterPro" id="IPR003100">
    <property type="entry name" value="PAZ_dom"/>
</dbReference>
<dbReference type="InterPro" id="IPR036085">
    <property type="entry name" value="PAZ_dom_sf"/>
</dbReference>
<dbReference type="InterPro" id="IPR003165">
    <property type="entry name" value="Piwi"/>
</dbReference>
<dbReference type="InterPro" id="IPR045246">
    <property type="entry name" value="Piwi_ago-like"/>
</dbReference>
<dbReference type="InterPro" id="IPR012337">
    <property type="entry name" value="RNaseH-like_sf"/>
</dbReference>
<dbReference type="InterPro" id="IPR036397">
    <property type="entry name" value="RNaseH_sf"/>
</dbReference>
<dbReference type="PANTHER" id="PTHR22891">
    <property type="entry name" value="EUKARYOTIC TRANSLATION INITIATION FACTOR 2C"/>
    <property type="match status" value="1"/>
</dbReference>
<dbReference type="Pfam" id="PF08699">
    <property type="entry name" value="ArgoL1"/>
    <property type="match status" value="1"/>
</dbReference>
<dbReference type="Pfam" id="PF16488">
    <property type="entry name" value="ArgoL2"/>
    <property type="match status" value="1"/>
</dbReference>
<dbReference type="Pfam" id="PF16486">
    <property type="entry name" value="ArgoN"/>
    <property type="match status" value="1"/>
</dbReference>
<dbReference type="Pfam" id="PF02170">
    <property type="entry name" value="PAZ"/>
    <property type="match status" value="1"/>
</dbReference>
<dbReference type="Pfam" id="PF02171">
    <property type="entry name" value="Piwi"/>
    <property type="match status" value="1"/>
</dbReference>
<dbReference type="SMART" id="SM01163">
    <property type="entry name" value="DUF1785"/>
    <property type="match status" value="1"/>
</dbReference>
<dbReference type="SMART" id="SM00949">
    <property type="entry name" value="PAZ"/>
    <property type="match status" value="1"/>
</dbReference>
<dbReference type="SMART" id="SM00950">
    <property type="entry name" value="Piwi"/>
    <property type="match status" value="1"/>
</dbReference>
<dbReference type="SUPFAM" id="SSF101690">
    <property type="entry name" value="PAZ domain"/>
    <property type="match status" value="1"/>
</dbReference>
<dbReference type="SUPFAM" id="SSF53098">
    <property type="entry name" value="Ribonuclease H-like"/>
    <property type="match status" value="1"/>
</dbReference>
<dbReference type="PROSITE" id="PS50821">
    <property type="entry name" value="PAZ"/>
    <property type="match status" value="1"/>
</dbReference>
<dbReference type="PROSITE" id="PS50822">
    <property type="entry name" value="PIWI"/>
    <property type="match status" value="1"/>
</dbReference>